<keyword id="KW-0963">Cytoplasm</keyword>
<keyword id="KW-1185">Reference proteome</keyword>
<keyword id="KW-0808">Transferase</keyword>
<name>SOT7_ARATH</name>
<reference key="1">
    <citation type="journal article" date="2000" name="Nature">
        <title>Sequence and analysis of chromosome 1 of the plant Arabidopsis thaliana.</title>
        <authorList>
            <person name="Theologis A."/>
            <person name="Ecker J.R."/>
            <person name="Palm C.J."/>
            <person name="Federspiel N.A."/>
            <person name="Kaul S."/>
            <person name="White O."/>
            <person name="Alonso J."/>
            <person name="Altafi H."/>
            <person name="Araujo R."/>
            <person name="Bowman C.L."/>
            <person name="Brooks S.Y."/>
            <person name="Buehler E."/>
            <person name="Chan A."/>
            <person name="Chao Q."/>
            <person name="Chen H."/>
            <person name="Cheuk R.F."/>
            <person name="Chin C.W."/>
            <person name="Chung M.K."/>
            <person name="Conn L."/>
            <person name="Conway A.B."/>
            <person name="Conway A.R."/>
            <person name="Creasy T.H."/>
            <person name="Dewar K."/>
            <person name="Dunn P."/>
            <person name="Etgu P."/>
            <person name="Feldblyum T.V."/>
            <person name="Feng J.-D."/>
            <person name="Fong B."/>
            <person name="Fujii C.Y."/>
            <person name="Gill J.E."/>
            <person name="Goldsmith A.D."/>
            <person name="Haas B."/>
            <person name="Hansen N.F."/>
            <person name="Hughes B."/>
            <person name="Huizar L."/>
            <person name="Hunter J.L."/>
            <person name="Jenkins J."/>
            <person name="Johnson-Hopson C."/>
            <person name="Khan S."/>
            <person name="Khaykin E."/>
            <person name="Kim C.J."/>
            <person name="Koo H.L."/>
            <person name="Kremenetskaia I."/>
            <person name="Kurtz D.B."/>
            <person name="Kwan A."/>
            <person name="Lam B."/>
            <person name="Langin-Hooper S."/>
            <person name="Lee A."/>
            <person name="Lee J.M."/>
            <person name="Lenz C.A."/>
            <person name="Li J.H."/>
            <person name="Li Y.-P."/>
            <person name="Lin X."/>
            <person name="Liu S.X."/>
            <person name="Liu Z.A."/>
            <person name="Luros J.S."/>
            <person name="Maiti R."/>
            <person name="Marziali A."/>
            <person name="Militscher J."/>
            <person name="Miranda M."/>
            <person name="Nguyen M."/>
            <person name="Nierman W.C."/>
            <person name="Osborne B.I."/>
            <person name="Pai G."/>
            <person name="Peterson J."/>
            <person name="Pham P.K."/>
            <person name="Rizzo M."/>
            <person name="Rooney T."/>
            <person name="Rowley D."/>
            <person name="Sakano H."/>
            <person name="Salzberg S.L."/>
            <person name="Schwartz J.R."/>
            <person name="Shinn P."/>
            <person name="Southwick A.M."/>
            <person name="Sun H."/>
            <person name="Tallon L.J."/>
            <person name="Tambunga G."/>
            <person name="Toriumi M.J."/>
            <person name="Town C.D."/>
            <person name="Utterback T."/>
            <person name="Van Aken S."/>
            <person name="Vaysberg M."/>
            <person name="Vysotskaia V.S."/>
            <person name="Walker M."/>
            <person name="Wu D."/>
            <person name="Yu G."/>
            <person name="Fraser C.M."/>
            <person name="Venter J.C."/>
            <person name="Davis R.W."/>
        </authorList>
    </citation>
    <scope>NUCLEOTIDE SEQUENCE [LARGE SCALE GENOMIC DNA]</scope>
    <source>
        <strain>cv. Columbia</strain>
    </source>
</reference>
<reference key="2">
    <citation type="journal article" date="2017" name="Plant J.">
        <title>Araport11: a complete reannotation of the Arabidopsis thaliana reference genome.</title>
        <authorList>
            <person name="Cheng C.Y."/>
            <person name="Krishnakumar V."/>
            <person name="Chan A.P."/>
            <person name="Thibaud-Nissen F."/>
            <person name="Schobel S."/>
            <person name="Town C.D."/>
        </authorList>
    </citation>
    <scope>GENOME REANNOTATION</scope>
    <source>
        <strain>cv. Columbia</strain>
    </source>
</reference>
<reference key="3">
    <citation type="submission" date="2005-05" db="EMBL/GenBank/DDBJ databases">
        <authorList>
            <person name="Underwood B.A."/>
            <person name="Xiao Y.-L."/>
            <person name="Moskal W.A. Jr."/>
            <person name="Monaghan E.L."/>
            <person name="Wang W."/>
            <person name="Redman J.C."/>
            <person name="Wu H.C."/>
            <person name="Utterback T."/>
            <person name="Town C.D."/>
        </authorList>
    </citation>
    <scope>NUCLEOTIDE SEQUENCE [LARGE SCALE MRNA]</scope>
    <source>
        <strain>cv. Columbia</strain>
    </source>
</reference>
<reference key="4">
    <citation type="journal article" date="2004" name="J. Exp. Bot.">
        <title>The multi-protein family of Arabidopsis sulphotransferases and their relatives in other plant species.</title>
        <authorList>
            <person name="Klein M."/>
            <person name="Papenbrock J."/>
        </authorList>
    </citation>
    <scope>GENE FAMILY</scope>
    <scope>NOMENCLATURE</scope>
</reference>
<accession>Q9FZ91</accession>
<dbReference type="EC" id="2.8.2.-"/>
<dbReference type="EMBL" id="AC021044">
    <property type="protein sequence ID" value="AAF98439.1"/>
    <property type="molecule type" value="Genomic_DNA"/>
</dbReference>
<dbReference type="EMBL" id="CP002684">
    <property type="protein sequence ID" value="AEE30927.1"/>
    <property type="molecule type" value="Genomic_DNA"/>
</dbReference>
<dbReference type="EMBL" id="DQ056466">
    <property type="protein sequence ID" value="AAY78623.1"/>
    <property type="molecule type" value="mRNA"/>
</dbReference>
<dbReference type="PIR" id="F86407">
    <property type="entry name" value="F86407"/>
</dbReference>
<dbReference type="RefSeq" id="NP_174139.1">
    <property type="nucleotide sequence ID" value="NM_102583.2"/>
</dbReference>
<dbReference type="SMR" id="Q9FZ91"/>
<dbReference type="FunCoup" id="Q9FZ91">
    <property type="interactions" value="42"/>
</dbReference>
<dbReference type="STRING" id="3702.Q9FZ91"/>
<dbReference type="PaxDb" id="3702-AT1G28170.1"/>
<dbReference type="ProteomicsDB" id="232612"/>
<dbReference type="EnsemblPlants" id="AT1G28170.1">
    <property type="protein sequence ID" value="AT1G28170.1"/>
    <property type="gene ID" value="AT1G28170"/>
</dbReference>
<dbReference type="GeneID" id="839711"/>
<dbReference type="Gramene" id="AT1G28170.1">
    <property type="protein sequence ID" value="AT1G28170.1"/>
    <property type="gene ID" value="AT1G28170"/>
</dbReference>
<dbReference type="KEGG" id="ath:AT1G28170"/>
<dbReference type="Araport" id="AT1G28170"/>
<dbReference type="TAIR" id="AT1G28170">
    <property type="gene designation" value="SOT7"/>
</dbReference>
<dbReference type="eggNOG" id="KOG1584">
    <property type="taxonomic scope" value="Eukaryota"/>
</dbReference>
<dbReference type="HOGENOM" id="CLU_027239_0_1_1"/>
<dbReference type="InParanoid" id="Q9FZ91"/>
<dbReference type="OMA" id="YNFYNMA"/>
<dbReference type="PhylomeDB" id="Q9FZ91"/>
<dbReference type="BioCyc" id="ARA:AT1G28170-MONOMER"/>
<dbReference type="PRO" id="PR:Q9FZ91"/>
<dbReference type="Proteomes" id="UP000006548">
    <property type="component" value="Chromosome 1"/>
</dbReference>
<dbReference type="ExpressionAtlas" id="Q9FZ91">
    <property type="expression patterns" value="baseline and differential"/>
</dbReference>
<dbReference type="GO" id="GO:0005737">
    <property type="term" value="C:cytoplasm"/>
    <property type="evidence" value="ECO:0007669"/>
    <property type="project" value="UniProtKB-SubCell"/>
</dbReference>
<dbReference type="GO" id="GO:0008146">
    <property type="term" value="F:sulfotransferase activity"/>
    <property type="evidence" value="ECO:0007669"/>
    <property type="project" value="InterPro"/>
</dbReference>
<dbReference type="Gene3D" id="3.40.50.300">
    <property type="entry name" value="P-loop containing nucleotide triphosphate hydrolases"/>
    <property type="match status" value="1"/>
</dbReference>
<dbReference type="InterPro" id="IPR027417">
    <property type="entry name" value="P-loop_NTPase"/>
</dbReference>
<dbReference type="InterPro" id="IPR000863">
    <property type="entry name" value="Sulfotransferase_dom"/>
</dbReference>
<dbReference type="PANTHER" id="PTHR11783">
    <property type="entry name" value="SULFOTRANSFERASE SULT"/>
    <property type="match status" value="1"/>
</dbReference>
<dbReference type="Pfam" id="PF00685">
    <property type="entry name" value="Sulfotransfer_1"/>
    <property type="match status" value="1"/>
</dbReference>
<dbReference type="SUPFAM" id="SSF52540">
    <property type="entry name" value="P-loop containing nucleoside triphosphate hydrolases"/>
    <property type="match status" value="1"/>
</dbReference>
<protein>
    <recommendedName>
        <fullName>Cytosolic sulfotransferase 7</fullName>
        <shortName>AtSOT7</shortName>
        <ecNumber>2.8.2.-</ecNumber>
    </recommendedName>
</protein>
<comment type="function">
    <text evidence="1">Sulfotransferase that utilizes 3'-phospho-5'-adenylyl sulfate (PAPS) as sulfonate donor.</text>
</comment>
<comment type="subcellular location">
    <subcellularLocation>
        <location evidence="1">Cytoplasm</location>
    </subcellularLocation>
</comment>
<comment type="similarity">
    <text evidence="2">Belongs to the sulfotransferase 1 family.</text>
</comment>
<feature type="chain" id="PRO_0000417055" description="Cytosolic sulfotransferase 7">
    <location>
        <begin position="1"/>
        <end position="326"/>
    </location>
</feature>
<feature type="active site" description="Proton acceptor" evidence="1">
    <location>
        <position position="138"/>
    </location>
</feature>
<feature type="binding site" evidence="1">
    <location>
        <begin position="72"/>
        <end position="77"/>
    </location>
    <ligand>
        <name>3'-phosphoadenylyl sulfate</name>
        <dbReference type="ChEBI" id="CHEBI:58339"/>
    </ligand>
</feature>
<feature type="binding site" evidence="1">
    <location>
        <position position="160"/>
    </location>
    <ligand>
        <name>3'-phosphoadenylyl sulfate</name>
        <dbReference type="ChEBI" id="CHEBI:58339"/>
    </ligand>
</feature>
<feature type="binding site" evidence="1">
    <location>
        <position position="168"/>
    </location>
    <ligand>
        <name>3'-phosphoadenylyl sulfate</name>
        <dbReference type="ChEBI" id="CHEBI:58339"/>
    </ligand>
</feature>
<feature type="binding site" evidence="1">
    <location>
        <position position="226"/>
    </location>
    <ligand>
        <name>3'-phosphoadenylyl sulfate</name>
        <dbReference type="ChEBI" id="CHEBI:58339"/>
    </ligand>
</feature>
<feature type="binding site" evidence="1">
    <location>
        <begin position="292"/>
        <end position="294"/>
    </location>
    <ligand>
        <name>3'-phosphoadenylyl sulfate</name>
        <dbReference type="ChEBI" id="CHEBI:58339"/>
    </ligand>
</feature>
<proteinExistence type="evidence at transcript level"/>
<evidence type="ECO:0000250" key="1"/>
<evidence type="ECO:0000305" key="2"/>
<sequence length="326" mass="37808">MDETKIPKKLQSDDEENISLISSLPFDVDFDSTKLFKYQGCWYDDKTLQGVLNFQRGFEPQDTDIIIASFPKSGTTWLKALTVALLERSKQKHSSDDHPLLLDNPHGLVPFLELRLFTETSKPDLTSISSSPRLFSTHVAFQTLREALKNSPCKIVYVWRNVKDVLVSFWYFNSAKLKIEEERSILDSMFESFCRGVINYGPSWEHVLNYWRASLEDSKNVLFLKYEELKTEPRVQLKRLAEFLDCPFTVEEEERGSVEEILDLCSLRNLKNLEINKTGKTLRGADHKIFFRKGEVGDSKNHLTPEMEKIIDMITEEKFEGSDLKF</sequence>
<gene>
    <name type="primary">SOT7</name>
    <name type="ordered locus">At1g28170</name>
    <name type="ORF">F3H9.17</name>
</gene>
<organism>
    <name type="scientific">Arabidopsis thaliana</name>
    <name type="common">Mouse-ear cress</name>
    <dbReference type="NCBI Taxonomy" id="3702"/>
    <lineage>
        <taxon>Eukaryota</taxon>
        <taxon>Viridiplantae</taxon>
        <taxon>Streptophyta</taxon>
        <taxon>Embryophyta</taxon>
        <taxon>Tracheophyta</taxon>
        <taxon>Spermatophyta</taxon>
        <taxon>Magnoliopsida</taxon>
        <taxon>eudicotyledons</taxon>
        <taxon>Gunneridae</taxon>
        <taxon>Pentapetalae</taxon>
        <taxon>rosids</taxon>
        <taxon>malvids</taxon>
        <taxon>Brassicales</taxon>
        <taxon>Brassicaceae</taxon>
        <taxon>Camelineae</taxon>
        <taxon>Arabidopsis</taxon>
    </lineage>
</organism>